<accession>Q8DXP1</accession>
<gene>
    <name evidence="1" type="primary">tal</name>
    <name type="ordered locus">SAG1809</name>
</gene>
<proteinExistence type="inferred from homology"/>
<sequence>MKYFLDTADVSEIRRLNRLGIVDGVTTNPTIISREGRDFKEVINEICQIVDGPVSAEVTGLTCDEMVTEAREIAKWSPNVVVKIPMTEEGLAAVSQLSKEGIKTNVTLIFTVAQGLSAMKAGATFISPFVGRLEDIGTDAYALIRDLRHIIDFYGFQSEIIAASIRGLAHVEGVAKCGAHIATIPDKTFASLFTHPLTDKGIETFLKDWDSFKKK</sequence>
<organism>
    <name type="scientific">Streptococcus agalactiae serotype V (strain ATCC BAA-611 / 2603 V/R)</name>
    <dbReference type="NCBI Taxonomy" id="208435"/>
    <lineage>
        <taxon>Bacteria</taxon>
        <taxon>Bacillati</taxon>
        <taxon>Bacillota</taxon>
        <taxon>Bacilli</taxon>
        <taxon>Lactobacillales</taxon>
        <taxon>Streptococcaceae</taxon>
        <taxon>Streptococcus</taxon>
    </lineage>
</organism>
<keyword id="KW-0963">Cytoplasm</keyword>
<keyword id="KW-0570">Pentose shunt</keyword>
<keyword id="KW-1185">Reference proteome</keyword>
<keyword id="KW-0704">Schiff base</keyword>
<keyword id="KW-0808">Transferase</keyword>
<comment type="function">
    <text evidence="1">Transaldolase is important for the balance of metabolites in the pentose-phosphate pathway.</text>
</comment>
<comment type="catalytic activity">
    <reaction evidence="1">
        <text>D-sedoheptulose 7-phosphate + D-glyceraldehyde 3-phosphate = D-erythrose 4-phosphate + beta-D-fructose 6-phosphate</text>
        <dbReference type="Rhea" id="RHEA:17053"/>
        <dbReference type="ChEBI" id="CHEBI:16897"/>
        <dbReference type="ChEBI" id="CHEBI:57483"/>
        <dbReference type="ChEBI" id="CHEBI:57634"/>
        <dbReference type="ChEBI" id="CHEBI:59776"/>
        <dbReference type="EC" id="2.2.1.2"/>
    </reaction>
</comment>
<comment type="pathway">
    <text evidence="1">Carbohydrate degradation; pentose phosphate pathway; D-glyceraldehyde 3-phosphate and beta-D-fructose 6-phosphate from D-ribose 5-phosphate and D-xylulose 5-phosphate (non-oxidative stage): step 2/3.</text>
</comment>
<comment type="subcellular location">
    <subcellularLocation>
        <location evidence="1">Cytoplasm</location>
    </subcellularLocation>
</comment>
<comment type="similarity">
    <text evidence="1">Belongs to the transaldolase family. Type 3B subfamily.</text>
</comment>
<reference key="1">
    <citation type="journal article" date="2002" name="Proc. Natl. Acad. Sci. U.S.A.">
        <title>Complete genome sequence and comparative genomic analysis of an emerging human pathogen, serotype V Streptococcus agalactiae.</title>
        <authorList>
            <person name="Tettelin H."/>
            <person name="Masignani V."/>
            <person name="Cieslewicz M.J."/>
            <person name="Eisen J.A."/>
            <person name="Peterson S.N."/>
            <person name="Wessels M.R."/>
            <person name="Paulsen I.T."/>
            <person name="Nelson K.E."/>
            <person name="Margarit I."/>
            <person name="Read T.D."/>
            <person name="Madoff L.C."/>
            <person name="Wolf A.M."/>
            <person name="Beanan M.J."/>
            <person name="Brinkac L.M."/>
            <person name="Daugherty S.C."/>
            <person name="DeBoy R.T."/>
            <person name="Durkin A.S."/>
            <person name="Kolonay J.F."/>
            <person name="Madupu R."/>
            <person name="Lewis M.R."/>
            <person name="Radune D."/>
            <person name="Fedorova N.B."/>
            <person name="Scanlan D."/>
            <person name="Khouri H.M."/>
            <person name="Mulligan S."/>
            <person name="Carty H.A."/>
            <person name="Cline R.T."/>
            <person name="Van Aken S.E."/>
            <person name="Gill J."/>
            <person name="Scarselli M."/>
            <person name="Mora M."/>
            <person name="Iacobini E.T."/>
            <person name="Brettoni C."/>
            <person name="Galli G."/>
            <person name="Mariani M."/>
            <person name="Vegni F."/>
            <person name="Maione D."/>
            <person name="Rinaudo D."/>
            <person name="Rappuoli R."/>
            <person name="Telford J.L."/>
            <person name="Kasper D.L."/>
            <person name="Grandi G."/>
            <person name="Fraser C.M."/>
        </authorList>
    </citation>
    <scope>NUCLEOTIDE SEQUENCE [LARGE SCALE GENOMIC DNA]</scope>
    <source>
        <strain>ATCC BAA-611 / 2603 V/R</strain>
    </source>
</reference>
<feature type="chain" id="PRO_0000173682" description="Probable transaldolase">
    <location>
        <begin position="1"/>
        <end position="215"/>
    </location>
</feature>
<feature type="active site" description="Schiff-base intermediate with substrate" evidence="1">
    <location>
        <position position="83"/>
    </location>
</feature>
<name>TAL_STRA5</name>
<dbReference type="EC" id="2.2.1.2" evidence="1"/>
<dbReference type="EMBL" id="AE009948">
    <property type="protein sequence ID" value="AAN00672.1"/>
    <property type="molecule type" value="Genomic_DNA"/>
</dbReference>
<dbReference type="RefSeq" id="NP_688799.1">
    <property type="nucleotide sequence ID" value="NC_004116.1"/>
</dbReference>
<dbReference type="SMR" id="Q8DXP1"/>
<dbReference type="STRING" id="208435.SAG1809"/>
<dbReference type="KEGG" id="sag:SAG1809"/>
<dbReference type="PATRIC" id="fig|208435.3.peg.1817"/>
<dbReference type="HOGENOM" id="CLU_079764_0_0_9"/>
<dbReference type="OrthoDB" id="9807051at2"/>
<dbReference type="UniPathway" id="UPA00115">
    <property type="reaction ID" value="UER00414"/>
</dbReference>
<dbReference type="Proteomes" id="UP000000821">
    <property type="component" value="Chromosome"/>
</dbReference>
<dbReference type="GO" id="GO:0005737">
    <property type="term" value="C:cytoplasm"/>
    <property type="evidence" value="ECO:0007669"/>
    <property type="project" value="UniProtKB-SubCell"/>
</dbReference>
<dbReference type="GO" id="GO:0016832">
    <property type="term" value="F:aldehyde-lyase activity"/>
    <property type="evidence" value="ECO:0007669"/>
    <property type="project" value="InterPro"/>
</dbReference>
<dbReference type="GO" id="GO:0004801">
    <property type="term" value="F:transaldolase activity"/>
    <property type="evidence" value="ECO:0007669"/>
    <property type="project" value="UniProtKB-UniRule"/>
</dbReference>
<dbReference type="GO" id="GO:0005975">
    <property type="term" value="P:carbohydrate metabolic process"/>
    <property type="evidence" value="ECO:0007669"/>
    <property type="project" value="InterPro"/>
</dbReference>
<dbReference type="GO" id="GO:0006098">
    <property type="term" value="P:pentose-phosphate shunt"/>
    <property type="evidence" value="ECO:0007669"/>
    <property type="project" value="UniProtKB-UniRule"/>
</dbReference>
<dbReference type="CDD" id="cd00956">
    <property type="entry name" value="Transaldolase_FSA"/>
    <property type="match status" value="1"/>
</dbReference>
<dbReference type="FunFam" id="3.20.20.70:FF:000018">
    <property type="entry name" value="Probable transaldolase"/>
    <property type="match status" value="1"/>
</dbReference>
<dbReference type="Gene3D" id="3.20.20.70">
    <property type="entry name" value="Aldolase class I"/>
    <property type="match status" value="1"/>
</dbReference>
<dbReference type="HAMAP" id="MF_00494">
    <property type="entry name" value="Transaldolase_3b"/>
    <property type="match status" value="1"/>
</dbReference>
<dbReference type="InterPro" id="IPR013785">
    <property type="entry name" value="Aldolase_TIM"/>
</dbReference>
<dbReference type="InterPro" id="IPR001585">
    <property type="entry name" value="TAL/FSA"/>
</dbReference>
<dbReference type="InterPro" id="IPR022999">
    <property type="entry name" value="Transaldolase_3B"/>
</dbReference>
<dbReference type="InterPro" id="IPR004731">
    <property type="entry name" value="Transaldolase_3B/F6P_aldolase"/>
</dbReference>
<dbReference type="InterPro" id="IPR018225">
    <property type="entry name" value="Transaldolase_AS"/>
</dbReference>
<dbReference type="InterPro" id="IPR033919">
    <property type="entry name" value="TSA/FSA_arc/bac"/>
</dbReference>
<dbReference type="NCBIfam" id="TIGR00875">
    <property type="entry name" value="fsa_talC_mipB"/>
    <property type="match status" value="1"/>
</dbReference>
<dbReference type="PANTHER" id="PTHR10683">
    <property type="entry name" value="TRANSALDOLASE"/>
    <property type="match status" value="1"/>
</dbReference>
<dbReference type="PANTHER" id="PTHR10683:SF36">
    <property type="entry name" value="TRANSALDOLASE"/>
    <property type="match status" value="1"/>
</dbReference>
<dbReference type="Pfam" id="PF00923">
    <property type="entry name" value="TAL_FSA"/>
    <property type="match status" value="1"/>
</dbReference>
<dbReference type="SUPFAM" id="SSF51569">
    <property type="entry name" value="Aldolase"/>
    <property type="match status" value="1"/>
</dbReference>
<dbReference type="PROSITE" id="PS01054">
    <property type="entry name" value="TRANSALDOLASE_1"/>
    <property type="match status" value="1"/>
</dbReference>
<dbReference type="PROSITE" id="PS00958">
    <property type="entry name" value="TRANSALDOLASE_2"/>
    <property type="match status" value="1"/>
</dbReference>
<evidence type="ECO:0000255" key="1">
    <source>
        <dbReference type="HAMAP-Rule" id="MF_00494"/>
    </source>
</evidence>
<protein>
    <recommendedName>
        <fullName evidence="1">Probable transaldolase</fullName>
        <ecNumber evidence="1">2.2.1.2</ecNumber>
    </recommendedName>
</protein>